<proteinExistence type="inferred from homology"/>
<sequence length="490" mass="51513">MMSGYNGDGVSSLPTRTQSPLARGAHPGAVLLSPKRTALGTLGGGAGGSSAQLMSPSQHSLSLNDILDQQAHPSRVDSSSAMSLDASIHQQQHTSGVGMLSPLLQPQASSISVKTAFLDSFGSRPSSAIGLQHGQGQGPDGPQSATGMSLNNSNIMVNFTNDVNQLCTWMSMLTSAQQNTVMDNLLSSLNEEVLQHTKLKLESLTNSGYLSPSLRPIASPIPSRVATLETSTQSASSAQLPGSLMLDSILSDSAAAGAGSTNSNNTNMASHSLAVNSMYRQWSPSPQMNSAQPMFDYLNDITRPRSAEPSRLRNGHTSHHQNGSHHIAMNSGNGAPPNSHSSTGHQVSSQAGGRFSNIKPQRPHSPTSLTKSTSSSSNFSEAQSPAAQPTSPGPSTPNAASNVSSSSNMNPKSLCDPKLLKNIPAWLKSLRLHKYSASLNGKSWQELIDLDDAILEDMGVSALGARRKLLKAFAIVKECKERGLVDESAY</sequence>
<reference key="1">
    <citation type="journal article" date="2004" name="Science">
        <title>The Ashbya gossypii genome as a tool for mapping the ancient Saccharomyces cerevisiae genome.</title>
        <authorList>
            <person name="Dietrich F.S."/>
            <person name="Voegeli S."/>
            <person name="Brachat S."/>
            <person name="Lerch A."/>
            <person name="Gates K."/>
            <person name="Steiner S."/>
            <person name="Mohr C."/>
            <person name="Poehlmann R."/>
            <person name="Luedi P."/>
            <person name="Choi S."/>
            <person name="Wing R.A."/>
            <person name="Flavier A."/>
            <person name="Gaffney T.D."/>
            <person name="Philippsen P."/>
        </authorList>
    </citation>
    <scope>NUCLEOTIDE SEQUENCE [LARGE SCALE GENOMIC DNA]</scope>
    <source>
        <strain>ATCC 10895 / CBS 109.51 / FGSC 9923 / NRRL Y-1056</strain>
    </source>
</reference>
<reference key="2">
    <citation type="journal article" date="2013" name="G3 (Bethesda)">
        <title>Genomes of Ashbya fungi isolated from insects reveal four mating-type loci, numerous translocations, lack of transposons, and distinct gene duplications.</title>
        <authorList>
            <person name="Dietrich F.S."/>
            <person name="Voegeli S."/>
            <person name="Kuo S."/>
            <person name="Philippsen P."/>
        </authorList>
    </citation>
    <scope>GENOME REANNOTATION</scope>
    <scope>SEQUENCE REVISION TO 207</scope>
    <source>
        <strain>ATCC 10895 / CBS 109.51 / FGSC 9923 / NRRL Y-1056</strain>
    </source>
</reference>
<feature type="chain" id="PRO_0000081446" description="RNA-binding protein VTS1">
    <location>
        <begin position="1"/>
        <end position="490"/>
    </location>
</feature>
<feature type="domain" description="SAM" evidence="3">
    <location>
        <begin position="418"/>
        <end position="479"/>
    </location>
</feature>
<feature type="region of interest" description="Disordered" evidence="4">
    <location>
        <begin position="1"/>
        <end position="29"/>
    </location>
</feature>
<feature type="region of interest" description="Disordered" evidence="4">
    <location>
        <begin position="71"/>
        <end position="90"/>
    </location>
</feature>
<feature type="region of interest" description="Disordered" evidence="4">
    <location>
        <begin position="305"/>
        <end position="410"/>
    </location>
</feature>
<feature type="compositionally biased region" description="Polar residues" evidence="4">
    <location>
        <begin position="76"/>
        <end position="90"/>
    </location>
</feature>
<feature type="compositionally biased region" description="Basic residues" evidence="4">
    <location>
        <begin position="313"/>
        <end position="323"/>
    </location>
</feature>
<feature type="compositionally biased region" description="Polar residues" evidence="4">
    <location>
        <begin position="330"/>
        <end position="351"/>
    </location>
</feature>
<feature type="compositionally biased region" description="Low complexity" evidence="4">
    <location>
        <begin position="365"/>
        <end position="384"/>
    </location>
</feature>
<feature type="compositionally biased region" description="Low complexity" evidence="4">
    <location>
        <begin position="396"/>
        <end position="410"/>
    </location>
</feature>
<organism>
    <name type="scientific">Eremothecium gossypii (strain ATCC 10895 / CBS 109.51 / FGSC 9923 / NRRL Y-1056)</name>
    <name type="common">Yeast</name>
    <name type="synonym">Ashbya gossypii</name>
    <dbReference type="NCBI Taxonomy" id="284811"/>
    <lineage>
        <taxon>Eukaryota</taxon>
        <taxon>Fungi</taxon>
        <taxon>Dikarya</taxon>
        <taxon>Ascomycota</taxon>
        <taxon>Saccharomycotina</taxon>
        <taxon>Saccharomycetes</taxon>
        <taxon>Saccharomycetales</taxon>
        <taxon>Saccharomycetaceae</taxon>
        <taxon>Eremothecium</taxon>
    </lineage>
</organism>
<gene>
    <name type="primary">VTS1</name>
    <name type="ordered locus">ADR394W</name>
</gene>
<dbReference type="EMBL" id="AE016817">
    <property type="protein sequence ID" value="AAS52313.2"/>
    <property type="molecule type" value="Genomic_DNA"/>
</dbReference>
<dbReference type="RefSeq" id="NP_984489.2">
    <property type="nucleotide sequence ID" value="NM_209842.2"/>
</dbReference>
<dbReference type="SMR" id="Q758Y4"/>
<dbReference type="FunCoup" id="Q758Y4">
    <property type="interactions" value="51"/>
</dbReference>
<dbReference type="STRING" id="284811.Q758Y4"/>
<dbReference type="EnsemblFungi" id="AAS52313">
    <property type="protein sequence ID" value="AAS52313"/>
    <property type="gene ID" value="AGOS_ADR394W"/>
</dbReference>
<dbReference type="GeneID" id="4620654"/>
<dbReference type="KEGG" id="ago:AGOS_ADR394W"/>
<dbReference type="eggNOG" id="KOG3791">
    <property type="taxonomic scope" value="Eukaryota"/>
</dbReference>
<dbReference type="HOGENOM" id="CLU_595905_0_0_1"/>
<dbReference type="InParanoid" id="Q758Y4"/>
<dbReference type="OMA" id="QQNTVMD"/>
<dbReference type="OrthoDB" id="2155283at2759"/>
<dbReference type="Proteomes" id="UP000000591">
    <property type="component" value="Chromosome IV"/>
</dbReference>
<dbReference type="GO" id="GO:0005829">
    <property type="term" value="C:cytosol"/>
    <property type="evidence" value="ECO:0007669"/>
    <property type="project" value="UniProtKB-SubCell"/>
</dbReference>
<dbReference type="GO" id="GO:0000932">
    <property type="term" value="C:P-body"/>
    <property type="evidence" value="ECO:0000318"/>
    <property type="project" value="GO_Central"/>
</dbReference>
<dbReference type="GO" id="GO:0003729">
    <property type="term" value="F:mRNA binding"/>
    <property type="evidence" value="ECO:0000318"/>
    <property type="project" value="GO_Central"/>
</dbReference>
<dbReference type="GO" id="GO:0000166">
    <property type="term" value="F:nucleotide binding"/>
    <property type="evidence" value="ECO:0007669"/>
    <property type="project" value="UniProtKB-KW"/>
</dbReference>
<dbReference type="GO" id="GO:0000289">
    <property type="term" value="P:nuclear-transcribed mRNA poly(A) tail shortening"/>
    <property type="evidence" value="ECO:0000318"/>
    <property type="project" value="GO_Central"/>
</dbReference>
<dbReference type="GO" id="GO:0015031">
    <property type="term" value="P:protein transport"/>
    <property type="evidence" value="ECO:0007669"/>
    <property type="project" value="UniProtKB-KW"/>
</dbReference>
<dbReference type="CDD" id="cd09556">
    <property type="entry name" value="SAM_VTS1_fungal"/>
    <property type="match status" value="1"/>
</dbReference>
<dbReference type="FunFam" id="1.10.150.50:FF:000033">
    <property type="entry name" value="Protein vts1, variant"/>
    <property type="match status" value="1"/>
</dbReference>
<dbReference type="Gene3D" id="1.10.150.50">
    <property type="entry name" value="Transcription Factor, Ets-1"/>
    <property type="match status" value="1"/>
</dbReference>
<dbReference type="InterPro" id="IPR001660">
    <property type="entry name" value="SAM"/>
</dbReference>
<dbReference type="InterPro" id="IPR013761">
    <property type="entry name" value="SAM/pointed_sf"/>
</dbReference>
<dbReference type="InterPro" id="IPR050897">
    <property type="entry name" value="SMAUG/VTS1_RNA-bind"/>
</dbReference>
<dbReference type="InterPro" id="IPR037635">
    <property type="entry name" value="VTS1_SAM"/>
</dbReference>
<dbReference type="PANTHER" id="PTHR12515:SF5">
    <property type="entry name" value="PROTEIN SMAUG"/>
    <property type="match status" value="1"/>
</dbReference>
<dbReference type="PANTHER" id="PTHR12515">
    <property type="entry name" value="STERILE ALPHA MOTIF DOMAIN CONTAINING PROTEIN 4-RELATED"/>
    <property type="match status" value="1"/>
</dbReference>
<dbReference type="Pfam" id="PF07647">
    <property type="entry name" value="SAM_2"/>
    <property type="match status" value="1"/>
</dbReference>
<dbReference type="SMART" id="SM00454">
    <property type="entry name" value="SAM"/>
    <property type="match status" value="1"/>
</dbReference>
<dbReference type="SUPFAM" id="SSF47769">
    <property type="entry name" value="SAM/Pointed domain"/>
    <property type="match status" value="1"/>
</dbReference>
<dbReference type="PROSITE" id="PS50105">
    <property type="entry name" value="SAM_DOMAIN"/>
    <property type="match status" value="1"/>
</dbReference>
<accession>Q758Y4</accession>
<name>VTS1_EREGS</name>
<keyword id="KW-0963">Cytoplasm</keyword>
<keyword id="KW-0547">Nucleotide-binding</keyword>
<keyword id="KW-0653">Protein transport</keyword>
<keyword id="KW-1185">Reference proteome</keyword>
<keyword id="KW-0694">RNA-binding</keyword>
<keyword id="KW-0813">Transport</keyword>
<evidence type="ECO:0000250" key="1">
    <source>
        <dbReference type="UniProtKB" id="J9VVN9"/>
    </source>
</evidence>
<evidence type="ECO:0000250" key="2">
    <source>
        <dbReference type="UniProtKB" id="Q08831"/>
    </source>
</evidence>
<evidence type="ECO:0000255" key="3">
    <source>
        <dbReference type="PROSITE-ProRule" id="PRU00184"/>
    </source>
</evidence>
<evidence type="ECO:0000256" key="4">
    <source>
        <dbReference type="SAM" id="MobiDB-lite"/>
    </source>
</evidence>
<evidence type="ECO:0000305" key="5"/>
<comment type="function">
    <text evidence="2">RNA-binding protein involved in post-transcriptional regulation through transcript degradation.</text>
</comment>
<comment type="subunit">
    <text evidence="2">Monomer. Binds to RNA.</text>
</comment>
<comment type="subcellular location">
    <subcellularLocation>
        <location evidence="2">Cytoplasm</location>
        <location evidence="2">Cytosol</location>
    </subcellularLocation>
    <subcellularLocation>
        <location evidence="1">Cytoplasm</location>
        <location evidence="1">P-body</location>
    </subcellularLocation>
</comment>
<comment type="similarity">
    <text evidence="5">Belongs to the VTS1 family.</text>
</comment>
<protein>
    <recommendedName>
        <fullName>RNA-binding protein VTS1</fullName>
    </recommendedName>
</protein>